<evidence type="ECO:0000256" key="1">
    <source>
        <dbReference type="SAM" id="MobiDB-lite"/>
    </source>
</evidence>
<evidence type="ECO:0000269" key="2">
    <source>
    </source>
</evidence>
<evidence type="ECO:0000303" key="3">
    <source>
    </source>
</evidence>
<evidence type="ECO:0000305" key="4"/>
<evidence type="ECO:0000305" key="5">
    <source>
    </source>
</evidence>
<protein>
    <recommendedName>
        <fullName evidence="4">Probable serine protease Ga0098714_109514</fullName>
        <ecNumber evidence="5">3.4.21.-</ecNumber>
    </recommendedName>
</protein>
<feature type="chain" id="PRO_0000455583" description="Probable serine protease Ga0098714_109514">
    <location>
        <begin position="1"/>
        <end position="785"/>
    </location>
</feature>
<feature type="region of interest" description="Disordered" evidence="1">
    <location>
        <begin position="470"/>
        <end position="503"/>
    </location>
</feature>
<feature type="region of interest" description="Disordered" evidence="1">
    <location>
        <begin position="608"/>
        <end position="629"/>
    </location>
</feature>
<feature type="compositionally biased region" description="Basic and acidic residues" evidence="1">
    <location>
        <begin position="470"/>
        <end position="481"/>
    </location>
</feature>
<feature type="compositionally biased region" description="Basic and acidic residues" evidence="1">
    <location>
        <begin position="491"/>
        <end position="501"/>
    </location>
</feature>
<accession>P0DV47</accession>
<reference key="1">
    <citation type="journal article" date="2015" name="Genome Announc.">
        <title>Genome Sequence of Bradyrhizobium tropiciagri Strain CNPSo 1112T, Isolated from a Root Nodule of Neonotonia wightii.</title>
        <authorList>
            <person name="Delamuta J.R."/>
            <person name="Gomes D.F."/>
            <person name="Ribeiro R.A."/>
            <person name="Chueire L.M."/>
            <person name="Souza R.C."/>
            <person name="Almeida L.G."/>
            <person name="Vasconcelos A.T."/>
            <person name="Hungria M."/>
        </authorList>
    </citation>
    <scope>NUCLEOTIDE SEQUENCE [LARGE SCALE GENOMIC DNA]</scope>
    <source>
        <strain>LMG 28867 / SMS 303 / BR 1009 / SEMIA 6148 / CNPSo 1112</strain>
    </source>
</reference>
<reference key="2">
    <citation type="journal article" date="2022" name="Science">
        <title>Bacterial gasdermins reveal an ancient mechanism of cell death.</title>
        <authorList>
            <person name="Johnson A.G."/>
            <person name="Wein T."/>
            <person name="Mayer M.L."/>
            <person name="Duncan-Lowey B."/>
            <person name="Yirmiya E."/>
            <person name="Oppenheimer-Shaanan Y."/>
            <person name="Amitai G."/>
            <person name="Sorek R."/>
            <person name="Kranzusch P.J."/>
        </authorList>
    </citation>
    <scope>FUNCTION</scope>
    <source>
        <strain>LMG 28867 / SMS 303 / BR 1009 / SEMIA 6148 / CNPSo 1112</strain>
    </source>
</reference>
<gene>
    <name evidence="3" type="ORF">Ga0098714_109514</name>
</gene>
<keyword id="KW-0051">Antiviral defense</keyword>
<keyword id="KW-0378">Hydrolase</keyword>
<keyword id="KW-0645">Protease</keyword>
<keyword id="KW-0720">Serine protease</keyword>
<comment type="function">
    <text evidence="2 5">Probably a dedicated protease for substrate gasdermin bGSDM; cleaves the bGSDM precursor, releasing the pore-forming moiety, which integrates into the membrane and triggers cell death. Involved in defense against bacteriophages (Probable). Expression of gasdermin bGSDM and this neighboring protease is toxic in E.coli on solid medium (PubMed:35025633).</text>
</comment>
<comment type="similarity">
    <text evidence="4">Belongs to the peptidase S1 family.</text>
</comment>
<organism>
    <name type="scientific">Bradyrhizobium tropiciagri</name>
    <dbReference type="NCBI Taxonomy" id="312253"/>
    <lineage>
        <taxon>Bacteria</taxon>
        <taxon>Pseudomonadati</taxon>
        <taxon>Pseudomonadota</taxon>
        <taxon>Alphaproteobacteria</taxon>
        <taxon>Hyphomicrobiales</taxon>
        <taxon>Nitrobacteraceae</taxon>
        <taxon>Bradyrhizobium</taxon>
    </lineage>
</organism>
<proteinExistence type="inferred from homology"/>
<dbReference type="EC" id="3.4.21.-" evidence="5"/>
<dbReference type="RefSeq" id="WP_050425892.1">
    <property type="nucleotide sequence ID" value="NZ_LFLZ01000095.1"/>
</dbReference>
<dbReference type="SMR" id="P0DV47"/>
<dbReference type="OrthoDB" id="267579at2"/>
<dbReference type="GO" id="GO:0016788">
    <property type="term" value="F:hydrolase activity, acting on ester bonds"/>
    <property type="evidence" value="ECO:0007669"/>
    <property type="project" value="InterPro"/>
</dbReference>
<dbReference type="GO" id="GO:0008236">
    <property type="term" value="F:serine-type peptidase activity"/>
    <property type="evidence" value="ECO:0007669"/>
    <property type="project" value="UniProtKB-KW"/>
</dbReference>
<dbReference type="GO" id="GO:0051607">
    <property type="term" value="P:defense response to virus"/>
    <property type="evidence" value="ECO:0007669"/>
    <property type="project" value="UniProtKB-KW"/>
</dbReference>
<dbReference type="GO" id="GO:0006508">
    <property type="term" value="P:proteolysis"/>
    <property type="evidence" value="ECO:0007669"/>
    <property type="project" value="UniProtKB-KW"/>
</dbReference>
<dbReference type="Gene3D" id="1.10.575.10">
    <property type="entry name" value="P1 Nuclease"/>
    <property type="match status" value="1"/>
</dbReference>
<dbReference type="InterPro" id="IPR009003">
    <property type="entry name" value="Peptidase_S1_PA"/>
</dbReference>
<dbReference type="InterPro" id="IPR008947">
    <property type="entry name" value="PLipase_C/P1_nuclease_dom_sf"/>
</dbReference>
<dbReference type="SUPFAM" id="SSF48537">
    <property type="entry name" value="Phospholipase C/P1 nuclease"/>
    <property type="match status" value="1"/>
</dbReference>
<dbReference type="SUPFAM" id="SSF50494">
    <property type="entry name" value="Trypsin-like serine proteases"/>
    <property type="match status" value="1"/>
</dbReference>
<sequence length="785" mass="85077">MTVLDLSYNFANLSVHDLLEARDTYHYHLLSKANVVGTAIGLYLIRKDEAWPTRKGEGKTPPNKKTYARTLSNSEVRDYSWPCILAFVRSWANEDAFGPAGRYDPAQIVPKTLYLADGRAVPVCVVQADQAGSDTSATYSPPGILPAHKLGGGSPIIVRVQGAEYSATAGCLVSDGHLTYALTARHACGEADTRIFSYLRSGEVEIGASSANQLTRKPFSEVYPDFPGRRSYVALDVGLVRLDQVDDWTSNTYGLPPVGPLGDVHEKNLSLRLIDQPVLGRGATSGLVRGTIKALFYRYRSVGGYDYVGDFLISPAEGLATRHGDSGMVWHLDATTEDDAANPKPLPKRDLRPLAVAWGGQVFEESGVRSAFSIATSLSNVCKLLDVELVTDQSRGVSGYWGRTGHYSIAAFAVALVGDTDLRDFLNRNLGILSFDLDTIAEKGFDKSVGQLGDNFVPLADVPDEIWKKLDHGKNGREGGRDVSAGPHGSDGPEHPNHYADIDGEIGPHKTFRAACLADDSNLTVDAWLQYYETMAAKAKADGDEDGARRHRNKLKQGLLPFRVWQFFDAMVAFVENKDVVGFLTAAGAAAHYMGDASQPLHGSVYSDGDASRTVTRHHPRTGEDEEVSYGSGVHSAFETAMIADKAAQLFPLIKQELSGPGGHALPLLTSGKAMAKATVELMDKVAGILEPMRILDSYEQAGAGTRKATLDGMWKDLGDDTAQVMALGARYLAMLWESAWVHGKGSDIPVRNLTDQNPQDVRARYIQTSFVPSLTLDKIGDELT</sequence>
<name>PROT_BRATP</name>